<sequence length="319" mass="35527">MSLNYLDFELPIAELEVKIEELQNVSRAGELDLELEEEVSKLKEKSDRLKEKIFSELGAWQVSQLARHPLRPYTRDYIERIFTEFDEFAGDRTFANDPAILGGIARLDGEPVMVIGQQKGRGTAEKIKRNFGMPKPEGYRKALRLMEMAERFKMPIMTFIDTPGAYPGVGAEERGQSEAIARNLKVMASLKVPTICTVIGEGGSGGALAIGVGDRVNMLQYSTYSVISPEGCASILWKSADKAPLAAEAMGVTAKRVKELDLINNLVDEPLGGAHRNYDAMARNLKVRLKRDLADLQALSLEEMLDQRYKRLMSFGYCS</sequence>
<dbReference type="EC" id="2.1.3.15" evidence="1"/>
<dbReference type="EMBL" id="CR954246">
    <property type="protein sequence ID" value="CAI87070.1"/>
    <property type="molecule type" value="Genomic_DNA"/>
</dbReference>
<dbReference type="SMR" id="Q3IIX1"/>
<dbReference type="STRING" id="326442.PSHAa2014"/>
<dbReference type="KEGG" id="pha:PSHAa2014"/>
<dbReference type="eggNOG" id="COG0825">
    <property type="taxonomic scope" value="Bacteria"/>
</dbReference>
<dbReference type="HOGENOM" id="CLU_015486_0_2_6"/>
<dbReference type="BioCyc" id="PHAL326442:PSHA_RS09950-MONOMER"/>
<dbReference type="UniPathway" id="UPA00655">
    <property type="reaction ID" value="UER00711"/>
</dbReference>
<dbReference type="Proteomes" id="UP000006843">
    <property type="component" value="Chromosome I"/>
</dbReference>
<dbReference type="GO" id="GO:0009317">
    <property type="term" value="C:acetyl-CoA carboxylase complex"/>
    <property type="evidence" value="ECO:0007669"/>
    <property type="project" value="InterPro"/>
</dbReference>
<dbReference type="GO" id="GO:0003989">
    <property type="term" value="F:acetyl-CoA carboxylase activity"/>
    <property type="evidence" value="ECO:0007669"/>
    <property type="project" value="InterPro"/>
</dbReference>
<dbReference type="GO" id="GO:0005524">
    <property type="term" value="F:ATP binding"/>
    <property type="evidence" value="ECO:0007669"/>
    <property type="project" value="UniProtKB-KW"/>
</dbReference>
<dbReference type="GO" id="GO:0016743">
    <property type="term" value="F:carboxyl- or carbamoyltransferase activity"/>
    <property type="evidence" value="ECO:0007669"/>
    <property type="project" value="UniProtKB-UniRule"/>
</dbReference>
<dbReference type="GO" id="GO:0006633">
    <property type="term" value="P:fatty acid biosynthetic process"/>
    <property type="evidence" value="ECO:0007669"/>
    <property type="project" value="UniProtKB-KW"/>
</dbReference>
<dbReference type="GO" id="GO:2001295">
    <property type="term" value="P:malonyl-CoA biosynthetic process"/>
    <property type="evidence" value="ECO:0007669"/>
    <property type="project" value="UniProtKB-UniRule"/>
</dbReference>
<dbReference type="FunFam" id="3.90.226.10:FF:000008">
    <property type="entry name" value="Acetyl-coenzyme A carboxylase carboxyl transferase subunit alpha"/>
    <property type="match status" value="1"/>
</dbReference>
<dbReference type="Gene3D" id="3.90.226.10">
    <property type="entry name" value="2-enoyl-CoA Hydratase, Chain A, domain 1"/>
    <property type="match status" value="1"/>
</dbReference>
<dbReference type="HAMAP" id="MF_00823">
    <property type="entry name" value="AcetylCoA_CT_alpha"/>
    <property type="match status" value="1"/>
</dbReference>
<dbReference type="InterPro" id="IPR001095">
    <property type="entry name" value="Acetyl_CoA_COase_a_su"/>
</dbReference>
<dbReference type="InterPro" id="IPR029045">
    <property type="entry name" value="ClpP/crotonase-like_dom_sf"/>
</dbReference>
<dbReference type="InterPro" id="IPR011763">
    <property type="entry name" value="COA_CT_C"/>
</dbReference>
<dbReference type="NCBIfam" id="TIGR00513">
    <property type="entry name" value="accA"/>
    <property type="match status" value="1"/>
</dbReference>
<dbReference type="NCBIfam" id="NF041504">
    <property type="entry name" value="AccA_sub"/>
    <property type="match status" value="1"/>
</dbReference>
<dbReference type="NCBIfam" id="NF004344">
    <property type="entry name" value="PRK05724.1"/>
    <property type="match status" value="1"/>
</dbReference>
<dbReference type="PANTHER" id="PTHR42853">
    <property type="entry name" value="ACETYL-COENZYME A CARBOXYLASE CARBOXYL TRANSFERASE SUBUNIT ALPHA"/>
    <property type="match status" value="1"/>
</dbReference>
<dbReference type="PANTHER" id="PTHR42853:SF3">
    <property type="entry name" value="ACETYL-COENZYME A CARBOXYLASE CARBOXYL TRANSFERASE SUBUNIT ALPHA, CHLOROPLASTIC"/>
    <property type="match status" value="1"/>
</dbReference>
<dbReference type="Pfam" id="PF03255">
    <property type="entry name" value="ACCA"/>
    <property type="match status" value="1"/>
</dbReference>
<dbReference type="PRINTS" id="PR01069">
    <property type="entry name" value="ACCCTRFRASEA"/>
</dbReference>
<dbReference type="SUPFAM" id="SSF52096">
    <property type="entry name" value="ClpP/crotonase"/>
    <property type="match status" value="1"/>
</dbReference>
<dbReference type="PROSITE" id="PS50989">
    <property type="entry name" value="COA_CT_CTER"/>
    <property type="match status" value="1"/>
</dbReference>
<evidence type="ECO:0000255" key="1">
    <source>
        <dbReference type="HAMAP-Rule" id="MF_00823"/>
    </source>
</evidence>
<evidence type="ECO:0000255" key="2">
    <source>
        <dbReference type="PROSITE-ProRule" id="PRU01137"/>
    </source>
</evidence>
<name>ACCA_PSET1</name>
<protein>
    <recommendedName>
        <fullName evidence="1">Acetyl-coenzyme A carboxylase carboxyl transferase subunit alpha</fullName>
        <shortName evidence="1">ACCase subunit alpha</shortName>
        <shortName evidence="1">Acetyl-CoA carboxylase carboxyltransferase subunit alpha</shortName>
        <ecNumber evidence="1">2.1.3.15</ecNumber>
    </recommendedName>
</protein>
<proteinExistence type="inferred from homology"/>
<comment type="function">
    <text evidence="1">Component of the acetyl coenzyme A carboxylase (ACC) complex. First, biotin carboxylase catalyzes the carboxylation of biotin on its carrier protein (BCCP) and then the CO(2) group is transferred by the carboxyltransferase to acetyl-CoA to form malonyl-CoA.</text>
</comment>
<comment type="catalytic activity">
    <reaction evidence="1">
        <text>N(6)-carboxybiotinyl-L-lysyl-[protein] + acetyl-CoA = N(6)-biotinyl-L-lysyl-[protein] + malonyl-CoA</text>
        <dbReference type="Rhea" id="RHEA:54728"/>
        <dbReference type="Rhea" id="RHEA-COMP:10505"/>
        <dbReference type="Rhea" id="RHEA-COMP:10506"/>
        <dbReference type="ChEBI" id="CHEBI:57288"/>
        <dbReference type="ChEBI" id="CHEBI:57384"/>
        <dbReference type="ChEBI" id="CHEBI:83144"/>
        <dbReference type="ChEBI" id="CHEBI:83145"/>
        <dbReference type="EC" id="2.1.3.15"/>
    </reaction>
</comment>
<comment type="pathway">
    <text evidence="1">Lipid metabolism; malonyl-CoA biosynthesis; malonyl-CoA from acetyl-CoA: step 1/1.</text>
</comment>
<comment type="subunit">
    <text evidence="1">Acetyl-CoA carboxylase is a heterohexamer composed of biotin carboxyl carrier protein (AccB), biotin carboxylase (AccC) and two subunits each of ACCase subunit alpha (AccA) and ACCase subunit beta (AccD).</text>
</comment>
<comment type="subcellular location">
    <subcellularLocation>
        <location evidence="1">Cytoplasm</location>
    </subcellularLocation>
</comment>
<comment type="similarity">
    <text evidence="1">Belongs to the AccA family.</text>
</comment>
<keyword id="KW-0067">ATP-binding</keyword>
<keyword id="KW-0963">Cytoplasm</keyword>
<keyword id="KW-0275">Fatty acid biosynthesis</keyword>
<keyword id="KW-0276">Fatty acid metabolism</keyword>
<keyword id="KW-0444">Lipid biosynthesis</keyword>
<keyword id="KW-0443">Lipid metabolism</keyword>
<keyword id="KW-0547">Nucleotide-binding</keyword>
<keyword id="KW-1185">Reference proteome</keyword>
<keyword id="KW-0808">Transferase</keyword>
<reference key="1">
    <citation type="journal article" date="2005" name="Genome Res.">
        <title>Coping with cold: the genome of the versatile marine Antarctica bacterium Pseudoalteromonas haloplanktis TAC125.</title>
        <authorList>
            <person name="Medigue C."/>
            <person name="Krin E."/>
            <person name="Pascal G."/>
            <person name="Barbe V."/>
            <person name="Bernsel A."/>
            <person name="Bertin P.N."/>
            <person name="Cheung F."/>
            <person name="Cruveiller S."/>
            <person name="D'Amico S."/>
            <person name="Duilio A."/>
            <person name="Fang G."/>
            <person name="Feller G."/>
            <person name="Ho C."/>
            <person name="Mangenot S."/>
            <person name="Marino G."/>
            <person name="Nilsson J."/>
            <person name="Parrilli E."/>
            <person name="Rocha E.P.C."/>
            <person name="Rouy Z."/>
            <person name="Sekowska A."/>
            <person name="Tutino M.L."/>
            <person name="Vallenet D."/>
            <person name="von Heijne G."/>
            <person name="Danchin A."/>
        </authorList>
    </citation>
    <scope>NUCLEOTIDE SEQUENCE [LARGE SCALE GENOMIC DNA]</scope>
    <source>
        <strain>TAC 125</strain>
    </source>
</reference>
<accession>Q3IIX1</accession>
<organism>
    <name type="scientific">Pseudoalteromonas translucida (strain TAC 125)</name>
    <dbReference type="NCBI Taxonomy" id="326442"/>
    <lineage>
        <taxon>Bacteria</taxon>
        <taxon>Pseudomonadati</taxon>
        <taxon>Pseudomonadota</taxon>
        <taxon>Gammaproteobacteria</taxon>
        <taxon>Alteromonadales</taxon>
        <taxon>Pseudoalteromonadaceae</taxon>
        <taxon>Pseudoalteromonas</taxon>
    </lineage>
</organism>
<gene>
    <name evidence="1" type="primary">accA</name>
    <name type="ordered locus">PSHAa2014</name>
</gene>
<feature type="chain" id="PRO_0000223805" description="Acetyl-coenzyme A carboxylase carboxyl transferase subunit alpha">
    <location>
        <begin position="1"/>
        <end position="319"/>
    </location>
</feature>
<feature type="domain" description="CoA carboxyltransferase C-terminal" evidence="2">
    <location>
        <begin position="34"/>
        <end position="295"/>
    </location>
</feature>